<accession>P56216</accession>
<accession>O60049</accession>
<evidence type="ECO:0000255" key="1">
    <source>
        <dbReference type="PROSITE-ProRule" id="PRU00718"/>
    </source>
</evidence>
<evidence type="ECO:0000269" key="2">
    <source>
    </source>
</evidence>
<evidence type="ECO:0000305" key="3"/>
<evidence type="ECO:0007829" key="4">
    <source>
        <dbReference type="PDB" id="1AHU"/>
    </source>
</evidence>
<evidence type="ECO:0007829" key="5">
    <source>
        <dbReference type="PDB" id="1AHV"/>
    </source>
</evidence>
<evidence type="ECO:0007829" key="6">
    <source>
        <dbReference type="PDB" id="1E8G"/>
    </source>
</evidence>
<evidence type="ECO:0007829" key="7">
    <source>
        <dbReference type="PDB" id="1QLT"/>
    </source>
</evidence>
<evidence type="ECO:0007829" key="8">
    <source>
        <dbReference type="PDB" id="1QLU"/>
    </source>
</evidence>
<evidence type="ECO:0007829" key="9">
    <source>
        <dbReference type="PDB" id="1VAO"/>
    </source>
</evidence>
<evidence type="ECO:0007829" key="10">
    <source>
        <dbReference type="PDB" id="2VAO"/>
    </source>
</evidence>
<gene>
    <name type="primary">VAOA</name>
</gene>
<organism>
    <name type="scientific">Penicillium simplicissimum</name>
    <dbReference type="NCBI Taxonomy" id="69488"/>
    <lineage>
        <taxon>Eukaryota</taxon>
        <taxon>Fungi</taxon>
        <taxon>Dikarya</taxon>
        <taxon>Ascomycota</taxon>
        <taxon>Pezizomycotina</taxon>
        <taxon>Eurotiomycetes</taxon>
        <taxon>Eurotiomycetidae</taxon>
        <taxon>Eurotiales</taxon>
        <taxon>Aspergillaceae</taxon>
        <taxon>Penicillium</taxon>
    </lineage>
</organism>
<comment type="function">
    <text>Catalyzes the conversion of vanillin alcohol to vanillin, and also the conversion of a wide range of phenolic compounds bearing side chains of variable size at the para position of the aromatic ring. Crucial for the degradation of the secondary metabolites derived from the degradation of the lignin. Catalyzes besides the oxidation of 4-hydroxybenzyl alcohols, the oxidative deamination of 4-hydroxybenzylamines, the oxidative demethylation of 4-(methoxy-methyl)phenols and the oxidative hydration of 4-allylphenols. Most active with 4-allylphenols.</text>
</comment>
<comment type="catalytic activity">
    <reaction>
        <text>4-hydroxy-3-methoxy-benzenemethanol + O2 = vanillin + H2O2</text>
        <dbReference type="Rhea" id="RHEA:10036"/>
        <dbReference type="ChEBI" id="CHEBI:15379"/>
        <dbReference type="ChEBI" id="CHEBI:16240"/>
        <dbReference type="ChEBI" id="CHEBI:18346"/>
        <dbReference type="ChEBI" id="CHEBI:18353"/>
        <dbReference type="EC" id="1.1.3.38"/>
    </reaction>
</comment>
<comment type="cofactor">
    <cofactor>
        <name>FAD</name>
        <dbReference type="ChEBI" id="CHEBI:57692"/>
    </cofactor>
    <text>Binds 1 FAD covalently per subunit.</text>
</comment>
<comment type="activity regulation">
    <text>Competitively inhibited by cinnamyl and coniferyl alcohols and by isoeugenol.</text>
</comment>
<comment type="biophysicochemical properties">
    <phDependence>
        <text>Optimum pH is about 10.</text>
    </phDependence>
    <temperatureDependence>
        <text>Optimum temperature is 38 degrees Celsius.</text>
    </temperatureDependence>
</comment>
<comment type="subunit">
    <text>Homooctamer (tetramer of tightly interacting dimers).</text>
</comment>
<comment type="subcellular location">
    <subcellularLocation>
        <location evidence="2">Peroxisome</location>
    </subcellularLocation>
    <subcellularLocation>
        <location evidence="2">Cytoplasm</location>
    </subcellularLocation>
</comment>
<comment type="induction">
    <text>By 4-methoxybenzyl alcohols, anisyl and veratryl alcohols. Repressed by carbon catabolite.</text>
</comment>
<comment type="similarity">
    <text evidence="3">To bacterial flavocytochrome p-cresol methyl hydroxylase.</text>
</comment>
<dbReference type="EC" id="1.1.3.38"/>
<dbReference type="EMBL" id="Y15627">
    <property type="protein sequence ID" value="CAA75722.1"/>
    <property type="molecule type" value="Genomic_DNA"/>
</dbReference>
<dbReference type="PDB" id="1AHU">
    <property type="method" value="X-ray"/>
    <property type="resolution" value="2.70 A"/>
    <property type="chains" value="A/B=1-560"/>
</dbReference>
<dbReference type="PDB" id="1AHV">
    <property type="method" value="X-ray"/>
    <property type="resolution" value="3.10 A"/>
    <property type="chains" value="A/B=1-560"/>
</dbReference>
<dbReference type="PDB" id="1AHZ">
    <property type="method" value="X-ray"/>
    <property type="resolution" value="3.30 A"/>
    <property type="chains" value="A/B=1-560"/>
</dbReference>
<dbReference type="PDB" id="1DZN">
    <property type="method" value="X-ray"/>
    <property type="resolution" value="2.80 A"/>
    <property type="chains" value="A/B=1-560"/>
</dbReference>
<dbReference type="PDB" id="1E0Y">
    <property type="method" value="X-ray"/>
    <property type="resolution" value="2.75 A"/>
    <property type="chains" value="A/B=1-560"/>
</dbReference>
<dbReference type="PDB" id="1E8F">
    <property type="method" value="X-ray"/>
    <property type="resolution" value="2.90 A"/>
    <property type="chains" value="A/B=1-560"/>
</dbReference>
<dbReference type="PDB" id="1E8G">
    <property type="method" value="X-ray"/>
    <property type="resolution" value="2.10 A"/>
    <property type="chains" value="A/B=1-560"/>
</dbReference>
<dbReference type="PDB" id="1E8H">
    <property type="method" value="X-ray"/>
    <property type="resolution" value="2.60 A"/>
    <property type="chains" value="A/B=1-560"/>
</dbReference>
<dbReference type="PDB" id="1QLT">
    <property type="method" value="X-ray"/>
    <property type="resolution" value="2.20 A"/>
    <property type="chains" value="A/B=1-560"/>
</dbReference>
<dbReference type="PDB" id="1QLU">
    <property type="method" value="X-ray"/>
    <property type="resolution" value="2.40 A"/>
    <property type="chains" value="A/B=1-560"/>
</dbReference>
<dbReference type="PDB" id="1VAO">
    <property type="method" value="X-ray"/>
    <property type="resolution" value="2.50 A"/>
    <property type="chains" value="A/B=1-560"/>
</dbReference>
<dbReference type="PDB" id="1W1J">
    <property type="method" value="X-ray"/>
    <property type="resolution" value="2.70 A"/>
    <property type="chains" value="A/B=1-560"/>
</dbReference>
<dbReference type="PDB" id="1W1K">
    <property type="method" value="X-ray"/>
    <property type="resolution" value="2.55 A"/>
    <property type="chains" value="A/B=1-560"/>
</dbReference>
<dbReference type="PDB" id="1W1L">
    <property type="method" value="X-ray"/>
    <property type="resolution" value="2.70 A"/>
    <property type="chains" value="A/B=1-560"/>
</dbReference>
<dbReference type="PDB" id="1W1M">
    <property type="method" value="X-ray"/>
    <property type="resolution" value="3.00 A"/>
    <property type="chains" value="A/B=1-560"/>
</dbReference>
<dbReference type="PDB" id="2VAO">
    <property type="method" value="X-ray"/>
    <property type="resolution" value="2.80 A"/>
    <property type="chains" value="A/B=1-560"/>
</dbReference>
<dbReference type="PDB" id="5MXJ">
    <property type="method" value="X-ray"/>
    <property type="resolution" value="2.80 A"/>
    <property type="chains" value="A/B=1-560"/>
</dbReference>
<dbReference type="PDB" id="5MXU">
    <property type="method" value="X-ray"/>
    <property type="resolution" value="2.80 A"/>
    <property type="chains" value="A/B=1-560"/>
</dbReference>
<dbReference type="PDBsum" id="1AHU"/>
<dbReference type="PDBsum" id="1AHV"/>
<dbReference type="PDBsum" id="1AHZ"/>
<dbReference type="PDBsum" id="1DZN"/>
<dbReference type="PDBsum" id="1E0Y"/>
<dbReference type="PDBsum" id="1E8F"/>
<dbReference type="PDBsum" id="1E8G"/>
<dbReference type="PDBsum" id="1E8H"/>
<dbReference type="PDBsum" id="1QLT"/>
<dbReference type="PDBsum" id="1QLU"/>
<dbReference type="PDBsum" id="1VAO"/>
<dbReference type="PDBsum" id="1W1J"/>
<dbReference type="PDBsum" id="1W1K"/>
<dbReference type="PDBsum" id="1W1L"/>
<dbReference type="PDBsum" id="1W1M"/>
<dbReference type="PDBsum" id="2VAO"/>
<dbReference type="PDBsum" id="5MXJ"/>
<dbReference type="PDBsum" id="5MXU"/>
<dbReference type="SMR" id="P56216"/>
<dbReference type="CAZy" id="AA4">
    <property type="family name" value="Auxiliary Activities 4"/>
</dbReference>
<dbReference type="KEGG" id="ag:CAA75722"/>
<dbReference type="BioCyc" id="MetaCyc:MONOMER-17583"/>
<dbReference type="BRENDA" id="1.1.3.38">
    <property type="organism ID" value="4640"/>
</dbReference>
<dbReference type="SABIO-RK" id="P56216"/>
<dbReference type="EvolutionaryTrace" id="P56216"/>
<dbReference type="GO" id="GO:0005739">
    <property type="term" value="C:mitochondrion"/>
    <property type="evidence" value="ECO:0007669"/>
    <property type="project" value="TreeGrafter"/>
</dbReference>
<dbReference type="GO" id="GO:0005777">
    <property type="term" value="C:peroxisome"/>
    <property type="evidence" value="ECO:0007669"/>
    <property type="project" value="UniProtKB-SubCell"/>
</dbReference>
<dbReference type="GO" id="GO:0004458">
    <property type="term" value="F:D-lactate dehydrogenase (cytochrome) activity"/>
    <property type="evidence" value="ECO:0007669"/>
    <property type="project" value="TreeGrafter"/>
</dbReference>
<dbReference type="GO" id="GO:0008720">
    <property type="term" value="F:D-lactate dehydrogenase activity"/>
    <property type="evidence" value="ECO:0007669"/>
    <property type="project" value="TreeGrafter"/>
</dbReference>
<dbReference type="GO" id="GO:0071949">
    <property type="term" value="F:FAD binding"/>
    <property type="evidence" value="ECO:0007669"/>
    <property type="project" value="InterPro"/>
</dbReference>
<dbReference type="GO" id="GO:0018465">
    <property type="term" value="F:vanillyl-alcohol oxidase activity"/>
    <property type="evidence" value="ECO:0007669"/>
    <property type="project" value="UniProtKB-EC"/>
</dbReference>
<dbReference type="GO" id="GO:1903457">
    <property type="term" value="P:lactate catabolic process"/>
    <property type="evidence" value="ECO:0007669"/>
    <property type="project" value="TreeGrafter"/>
</dbReference>
<dbReference type="GO" id="GO:0015945">
    <property type="term" value="P:methanol metabolic process"/>
    <property type="evidence" value="ECO:0007669"/>
    <property type="project" value="UniProtKB-KW"/>
</dbReference>
<dbReference type="Gene3D" id="3.30.465.10">
    <property type="match status" value="1"/>
</dbReference>
<dbReference type="Gene3D" id="3.40.462.10">
    <property type="entry name" value="FAD-linked oxidases, C-terminal domain"/>
    <property type="match status" value="1"/>
</dbReference>
<dbReference type="Gene3D" id="3.30.43.10">
    <property type="entry name" value="Uridine Diphospho-n-acetylenolpyruvylglucosamine Reductase, domain 2"/>
    <property type="match status" value="1"/>
</dbReference>
<dbReference type="Gene3D" id="1.10.45.10">
    <property type="entry name" value="Vanillyl-alcohol Oxidase, Chain A, domain 4"/>
    <property type="match status" value="1"/>
</dbReference>
<dbReference type="InterPro" id="IPR016170">
    <property type="entry name" value="Cytok_DH_C_sf"/>
</dbReference>
<dbReference type="InterPro" id="IPR004113">
    <property type="entry name" value="FAD-bd_oxidored_4_C"/>
</dbReference>
<dbReference type="InterPro" id="IPR016166">
    <property type="entry name" value="FAD-bd_PCMH"/>
</dbReference>
<dbReference type="InterPro" id="IPR036318">
    <property type="entry name" value="FAD-bd_PCMH-like_sf"/>
</dbReference>
<dbReference type="InterPro" id="IPR016167">
    <property type="entry name" value="FAD-bd_PCMH_sub1"/>
</dbReference>
<dbReference type="InterPro" id="IPR016169">
    <property type="entry name" value="FAD-bd_PCMH_sub2"/>
</dbReference>
<dbReference type="InterPro" id="IPR016164">
    <property type="entry name" value="FAD-linked_Oxase-like_C"/>
</dbReference>
<dbReference type="InterPro" id="IPR006094">
    <property type="entry name" value="Oxid_FAD_bind_N"/>
</dbReference>
<dbReference type="InterPro" id="IPR016171">
    <property type="entry name" value="Vanillyl_alc_oxidase_C-sub2"/>
</dbReference>
<dbReference type="PANTHER" id="PTHR11748:SF114">
    <property type="entry name" value="ARYL-ALCOHOL OXIDASE VANILLYL-ALCOHOL OXIDASE (AFU_ORTHOLOGUE AFUA_3G09500)-RELATED"/>
    <property type="match status" value="1"/>
</dbReference>
<dbReference type="PANTHER" id="PTHR11748">
    <property type="entry name" value="D-LACTATE DEHYDROGENASE"/>
    <property type="match status" value="1"/>
</dbReference>
<dbReference type="Pfam" id="PF02913">
    <property type="entry name" value="FAD-oxidase_C"/>
    <property type="match status" value="1"/>
</dbReference>
<dbReference type="Pfam" id="PF01565">
    <property type="entry name" value="FAD_binding_4"/>
    <property type="match status" value="1"/>
</dbReference>
<dbReference type="SUPFAM" id="SSF56176">
    <property type="entry name" value="FAD-binding/transporter-associated domain-like"/>
    <property type="match status" value="1"/>
</dbReference>
<dbReference type="SUPFAM" id="SSF55103">
    <property type="entry name" value="FAD-linked oxidases, C-terminal domain"/>
    <property type="match status" value="1"/>
</dbReference>
<dbReference type="PROSITE" id="PS51387">
    <property type="entry name" value="FAD_PCMH"/>
    <property type="match status" value="1"/>
</dbReference>
<reference key="1">
    <citation type="journal article" date="1998" name="J. Biol. Chem.">
        <title>Molecular cloning, sequencing, and heterologous expression of the vaoA gene from Penicillium simplicissimum CBS 170.90 encoding vanillyl-alcohol oxidase.</title>
        <authorList>
            <person name="Benen J.A.E."/>
            <person name="Sanchez-Torres P."/>
            <person name="Wagemaker M.J.M."/>
            <person name="Fraaije M.W."/>
            <person name="van Berkel W.J.H."/>
            <person name="Visser J."/>
        </authorList>
    </citation>
    <scope>NUCLEOTIDE SEQUENCE [GENOMIC DNA]</scope>
    <scope>PROTEIN SEQUENCE OF 6-30 AND 130-148</scope>
    <source>
        <strain>ATCC 90172 / CBS 170.90 / PAZ 1</strain>
    </source>
</reference>
<reference key="2">
    <citation type="journal article" date="1997" name="Proteins">
        <title>Crystallization and preliminary X-ray analysis of the flavoenzyme vanillyl-alcohol oxidase from Penicillium simplicissimum.</title>
        <authorList>
            <person name="Mattevi A."/>
            <person name="Fraaije M.W."/>
            <person name="Coda A."/>
            <person name="van Berkel W.J.H."/>
        </authorList>
    </citation>
    <scope>X-RAY CRYSTALLOGRAPHY (2.5 ANGSTROMS)</scope>
    <source>
        <strain>ATCC 90172 / CBS 170.90 / PAZ 1</strain>
    </source>
</reference>
<reference key="3">
    <citation type="journal article" date="1999" name="J. Biol. Chem.">
        <title>Covalent flavinylation is essential for efficient redox catalysis in vanillyl-alcohol oxidase.</title>
        <authorList>
            <person name="Fraaije M.W."/>
            <person name="van den Heuvel R.H.H."/>
            <person name="van Berkel W.J.H."/>
            <person name="Mattevi A."/>
        </authorList>
    </citation>
    <scope>X-RAY CRYSTALLOGRAPHY (2.2 ANGSTROMS) OF MUTANTS</scope>
    <source>
        <strain>ATCC 90172 / CBS 170.90 / PAZ 1</strain>
    </source>
</reference>
<reference key="4">
    <citation type="journal article" date="2000" name="J. Biol. Chem.">
        <title>Asp-170 is crucial for the redox properties of vanillyl-alcohol oxidase.</title>
        <authorList>
            <person name="van den Heuvel R.H.H."/>
            <person name="Fraaije M.W."/>
            <person name="Mattevi A."/>
            <person name="van Berkel W.J.H."/>
        </authorList>
    </citation>
    <scope>X-RAY CRYSTALLOGRAPHY (2.8 ANGSTROMS) OF D170S MUTANT</scope>
</reference>
<reference key="5">
    <citation type="journal article" date="2000" name="Proc. Natl. Acad. Sci. U.S.A.">
        <title>Inversion of stereospecificity of vanillyl-alcohol oxidase.</title>
        <authorList>
            <person name="van den Heuvel R.H.H."/>
            <person name="Fraaije M.W."/>
            <person name="Ferrer M."/>
            <person name="Mattevi A."/>
            <person name="van Berkel W.J.H."/>
        </authorList>
    </citation>
    <scope>X-RAY CRYSTALLOGRAPHY (2.75 ANGSTROMS) OF D170S/T457E MUTANT</scope>
</reference>
<reference key="6">
    <citation type="journal article" date="2000" name="J. Biol. Chem.">
        <title>Structural analysis of flavinylation in vanillyl-alcohol oxidase.</title>
        <authorList>
            <person name="Fraaije M.W."/>
            <person name="van den Heuvel R.H.H."/>
            <person name="van Berkel W.J.H."/>
            <person name="Mattevi A."/>
        </authorList>
    </citation>
    <scope>X-RAY CRYSTALLOGRAPHY (2.1 ANGSTROMS) OF MUTANTS</scope>
    <source>
        <strain>ATCC 90172 / CBS 170.90 / PAZ 1</strain>
    </source>
</reference>
<reference key="7">
    <citation type="journal article" date="1998" name="FEBS Lett.">
        <title>Subcellular localization of vanillyl-alcohol oxidase in Penicillium simplicissimum.</title>
        <authorList>
            <person name="Fraaije M.W."/>
            <person name="Sjollema K.A."/>
            <person name="Veenhuis M."/>
            <person name="van Berkel W.J.H."/>
        </authorList>
    </citation>
    <scope>SUBCELLULAR LOCATION</scope>
</reference>
<reference key="8">
    <citation type="journal article" date="1992" name="Eur. J. Biochem.">
        <title>Purification and characterization of vanillyl-alcohol oxidase from Penicillium simplicissimum. A novel aromatic alcohol oxidase containing covalently bound FAD.</title>
        <authorList>
            <person name="de Jong E."/>
            <person name="van Berkel W.J.H."/>
            <person name="van der Zwan R.P."/>
            <person name="de Bont J.A.M."/>
        </authorList>
    </citation>
    <scope>CHARACTERIZATION</scope>
    <source>
        <strain>ATCC 90172 / CBS 170.90 / PAZ 1</strain>
    </source>
</reference>
<reference key="9">
    <citation type="journal article" date="1995" name="Eur. J. Biochem.">
        <title>Substrate specificity of flavin-dependent vanillyl-alcohol oxidase from Penicillium simplicissimum. Evidence for the production of 4-hydroxycinnamyl alcohols from 4-allylphenols.</title>
        <authorList>
            <person name="Fraaije M.W."/>
            <person name="Veeger C."/>
            <person name="van Berkel W.J.H."/>
        </authorList>
    </citation>
    <scope>SUBSTRATE SPECIFICITY</scope>
    <source>
        <strain>ATCC 90172 / CBS 170.90 / PAZ 1</strain>
    </source>
</reference>
<name>VAOX_PENSI</name>
<feature type="chain" id="PRO_0000065763" description="Vanillyl-alcohol oxidase">
    <location>
        <begin position="1"/>
        <end position="560"/>
    </location>
</feature>
<feature type="domain" description="FAD-binding PCMH-type" evidence="1">
    <location>
        <begin position="67"/>
        <end position="272"/>
    </location>
</feature>
<feature type="active site">
    <location>
        <position position="108"/>
    </location>
</feature>
<feature type="active site">
    <location>
        <position position="503"/>
    </location>
</feature>
<feature type="active site">
    <location>
        <position position="504"/>
    </location>
</feature>
<feature type="site" description="Important for the catalytic mechanism; Involved in substrate deprotonation">
    <location>
        <position position="170"/>
    </location>
</feature>
<feature type="modified residue" description="Tele-8alpha-FAD histidine">
    <location>
        <position position="422"/>
    </location>
</feature>
<feature type="sequence conflict" description="In Ref. 1; CAA75722." evidence="3" ref="1">
    <original>R</original>
    <variation>G</variation>
    <location>
        <position position="274"/>
    </location>
</feature>
<feature type="sequence conflict" description="In Ref. 1; CAA75722." evidence="3" ref="1">
    <original>R</original>
    <variation>K</variation>
    <location>
        <position position="330"/>
    </location>
</feature>
<feature type="helix" evidence="6">
    <location>
        <begin position="18"/>
        <end position="32"/>
    </location>
</feature>
<feature type="helix" evidence="6">
    <location>
        <begin position="34"/>
        <end position="36"/>
    </location>
</feature>
<feature type="strand" evidence="6">
    <location>
        <begin position="37"/>
        <end position="39"/>
    </location>
</feature>
<feature type="helix" evidence="4">
    <location>
        <begin position="43"/>
        <end position="45"/>
    </location>
</feature>
<feature type="strand" evidence="6">
    <location>
        <begin position="51"/>
        <end position="54"/>
    </location>
</feature>
<feature type="strand" evidence="6">
    <location>
        <begin position="56"/>
        <end position="58"/>
    </location>
</feature>
<feature type="strand" evidence="8">
    <location>
        <begin position="68"/>
        <end position="70"/>
    </location>
</feature>
<feature type="strand" evidence="6">
    <location>
        <begin position="72"/>
        <end position="75"/>
    </location>
</feature>
<feature type="helix" evidence="6">
    <location>
        <begin position="80"/>
        <end position="93"/>
    </location>
</feature>
<feature type="strand" evidence="6">
    <location>
        <begin position="97"/>
        <end position="102"/>
    </location>
</feature>
<feature type="turn" evidence="6">
    <location>
        <begin position="106"/>
        <end position="111"/>
    </location>
</feature>
<feature type="strand" evidence="6">
    <location>
        <begin position="119"/>
        <end position="122"/>
    </location>
</feature>
<feature type="turn" evidence="6">
    <location>
        <begin position="124"/>
        <end position="126"/>
    </location>
</feature>
<feature type="strand" evidence="6">
    <location>
        <begin position="130"/>
        <end position="134"/>
    </location>
</feature>
<feature type="turn" evidence="6">
    <location>
        <begin position="135"/>
        <end position="138"/>
    </location>
</feature>
<feature type="strand" evidence="6">
    <location>
        <begin position="139"/>
        <end position="142"/>
    </location>
</feature>
<feature type="helix" evidence="6">
    <location>
        <begin position="148"/>
        <end position="157"/>
    </location>
</feature>
<feature type="turn" evidence="6">
    <location>
        <begin position="161"/>
        <end position="163"/>
    </location>
</feature>
<feature type="strand" evidence="7">
    <location>
        <begin position="170"/>
        <end position="172"/>
    </location>
</feature>
<feature type="helix" evidence="6">
    <location>
        <begin position="176"/>
        <end position="181"/>
    </location>
</feature>
<feature type="helix" evidence="10">
    <location>
        <begin position="189"/>
        <end position="191"/>
    </location>
</feature>
<feature type="helix" evidence="6">
    <location>
        <begin position="194"/>
        <end position="196"/>
    </location>
</feature>
<feature type="strand" evidence="6">
    <location>
        <begin position="197"/>
        <end position="204"/>
    </location>
</feature>
<feature type="strand" evidence="6">
    <location>
        <begin position="209"/>
        <end position="211"/>
    </location>
</feature>
<feature type="helix" evidence="6">
    <location>
        <begin position="213"/>
        <end position="216"/>
    </location>
</feature>
<feature type="helix" evidence="6">
    <location>
        <begin position="223"/>
        <end position="225"/>
    </location>
</feature>
<feature type="helix" evidence="6">
    <location>
        <begin position="230"/>
        <end position="232"/>
    </location>
</feature>
<feature type="turn" evidence="6">
    <location>
        <begin position="237"/>
        <end position="241"/>
    </location>
</feature>
<feature type="strand" evidence="9">
    <location>
        <begin position="246"/>
        <end position="248"/>
    </location>
</feature>
<feature type="helix" evidence="6">
    <location>
        <begin position="251"/>
        <end position="254"/>
    </location>
</feature>
<feature type="strand" evidence="6">
    <location>
        <begin position="255"/>
        <end position="268"/>
    </location>
</feature>
<feature type="strand" evidence="6">
    <location>
        <begin position="276"/>
        <end position="283"/>
    </location>
</feature>
<feature type="helix" evidence="6">
    <location>
        <begin position="286"/>
        <end position="288"/>
    </location>
</feature>
<feature type="helix" evidence="6">
    <location>
        <begin position="289"/>
        <end position="301"/>
    </location>
</feature>
<feature type="strand" evidence="6">
    <location>
        <begin position="310"/>
        <end position="313"/>
    </location>
</feature>
<feature type="helix" evidence="6">
    <location>
        <begin position="314"/>
        <end position="321"/>
    </location>
</feature>
<feature type="helix" evidence="6">
    <location>
        <begin position="324"/>
        <end position="326"/>
    </location>
</feature>
<feature type="helix" evidence="6">
    <location>
        <begin position="336"/>
        <end position="346"/>
    </location>
</feature>
<feature type="strand" evidence="6">
    <location>
        <begin position="350"/>
        <end position="359"/>
    </location>
</feature>
<feature type="helix" evidence="6">
    <location>
        <begin position="361"/>
        <end position="375"/>
    </location>
</feature>
<feature type="strand" evidence="6">
    <location>
        <begin position="382"/>
        <end position="384"/>
    </location>
</feature>
<feature type="helix" evidence="6">
    <location>
        <begin position="386"/>
        <end position="388"/>
    </location>
</feature>
<feature type="helix" evidence="6">
    <location>
        <begin position="394"/>
        <end position="401"/>
    </location>
</feature>
<feature type="turn" evidence="6">
    <location>
        <begin position="402"/>
        <end position="404"/>
    </location>
</feature>
<feature type="helix" evidence="6">
    <location>
        <begin position="409"/>
        <end position="416"/>
    </location>
</feature>
<feature type="strand" evidence="5">
    <location>
        <begin position="417"/>
        <end position="419"/>
    </location>
</feature>
<feature type="strand" evidence="6">
    <location>
        <begin position="420"/>
        <end position="425"/>
    </location>
</feature>
<feature type="strand" evidence="6">
    <location>
        <begin position="427"/>
        <end position="429"/>
    </location>
</feature>
<feature type="helix" evidence="6">
    <location>
        <begin position="433"/>
        <end position="450"/>
    </location>
</feature>
<feature type="strand" evidence="6">
    <location>
        <begin position="456"/>
        <end position="460"/>
    </location>
</feature>
<feature type="strand" evidence="6">
    <location>
        <begin position="465"/>
        <end position="474"/>
    </location>
</feature>
<feature type="helix" evidence="6">
    <location>
        <begin position="478"/>
        <end position="497"/>
    </location>
</feature>
<feature type="strand" evidence="8">
    <location>
        <begin position="502"/>
        <end position="504"/>
    </location>
</feature>
<feature type="helix" evidence="6">
    <location>
        <begin position="507"/>
        <end position="509"/>
    </location>
</feature>
<feature type="helix" evidence="6">
    <location>
        <begin position="510"/>
        <end position="516"/>
    </location>
</feature>
<feature type="helix" evidence="6">
    <location>
        <begin position="519"/>
        <end position="535"/>
    </location>
</feature>
<feature type="helix" evidence="6">
    <location>
        <begin position="545"/>
        <end position="547"/>
    </location>
</feature>
<feature type="helix" evidence="6">
    <location>
        <begin position="555"/>
        <end position="558"/>
    </location>
</feature>
<protein>
    <recommendedName>
        <fullName>Vanillyl-alcohol oxidase</fullName>
        <ecNumber>1.1.3.38</ecNumber>
    </recommendedName>
    <alternativeName>
        <fullName>4-allylphenol oxidase</fullName>
    </alternativeName>
    <alternativeName>
        <fullName>Aryl-alcohol oxidase</fullName>
    </alternativeName>
</protein>
<keyword id="KW-0002">3D-structure</keyword>
<keyword id="KW-0963">Cytoplasm</keyword>
<keyword id="KW-0903">Direct protein sequencing</keyword>
<keyword id="KW-0274">FAD</keyword>
<keyword id="KW-0285">Flavoprotein</keyword>
<keyword id="KW-0485">Methanol utilization</keyword>
<keyword id="KW-0560">Oxidoreductase</keyword>
<keyword id="KW-0576">Peroxisome</keyword>
<sequence length="560" mass="63035">MSKTQEFRPLTLPPKLSLSDFNEFIQDIIRIVGSENVEVISSKDQIVDGSYMKPTHTHDPHHVMDQDYFLASAIVAPRNVADVQSIVGLANKFSFPLWPISIGRNSGYGGAAPRVSGSVVLDMGKNMNRVLEVNVEGAYCVVEPGVTYHDLHNYLEANNLRDKLWLDVPDLGGGSVLGNAVERGVGYTPYGDHWMMHSGMEVVLANGELLRTGMGALPDPKRPETMGLKPEDQPWSKIAHLFPYGFGPYIDGLFSQSNMGIVTKIGIWLMPNPRGYQSYLITLPKDGDLKQAVDIIRPLRLGMALQNVPTIRHILLDAAVLGDKRSYSSRTEPLSDEELDKIAKQLNLGRWNFYGALYGPEPIRRVLWETIKDAFSAIPGVKFYFPEDTPENSVLRVRDKTMQGIPTYDELKWIDWLPNGAHLFFSPIAKVSGEDAMMQYAVTKKRCQEAGLDFIGTFTVGMREMHHIVCIVFNKKDLIQKRKVQWLMRTLIDDCAANGWGEYRTHLAFMDQIMETYNWNNSSFLRFNEVLKNAVDPNGIIAPGKSGVWPSQYSHVTWKL</sequence>
<proteinExistence type="evidence at protein level"/>